<feature type="chain" id="PRO_0000067194" description="Putative ankyrin repeat protein L767">
    <location>
        <begin position="1"/>
        <end position="632"/>
    </location>
</feature>
<feature type="repeat" description="ANK 1">
    <location>
        <begin position="61"/>
        <end position="97"/>
    </location>
</feature>
<feature type="repeat" description="ANK 2">
    <location>
        <begin position="228"/>
        <end position="250"/>
    </location>
</feature>
<feature type="repeat" description="ANK 3">
    <location>
        <begin position="251"/>
        <end position="282"/>
    </location>
</feature>
<feature type="repeat" description="ANK 4">
    <location>
        <begin position="345"/>
        <end position="374"/>
    </location>
</feature>
<feature type="repeat" description="ANK 5">
    <location>
        <begin position="517"/>
        <end position="546"/>
    </location>
</feature>
<reference key="1">
    <citation type="journal article" date="2004" name="Science">
        <title>The 1.2-megabase genome sequence of Mimivirus.</title>
        <authorList>
            <person name="Raoult D."/>
            <person name="Audic S."/>
            <person name="Robert C."/>
            <person name="Abergel C."/>
            <person name="Renesto P."/>
            <person name="Ogata H."/>
            <person name="La Scola B."/>
            <person name="Susan M."/>
            <person name="Claverie J.-M."/>
        </authorList>
    </citation>
    <scope>NUCLEOTIDE SEQUENCE [LARGE SCALE GENOMIC DNA]</scope>
    <source>
        <strain>Rowbotham-Bradford</strain>
    </source>
</reference>
<gene>
    <name type="ordered locus">MIMI_L767</name>
</gene>
<accession>Q5UPQ6</accession>
<protein>
    <recommendedName>
        <fullName>Putative ankyrin repeat protein L767</fullName>
    </recommendedName>
</protein>
<organism>
    <name type="scientific">Acanthamoeba polyphaga mimivirus</name>
    <name type="common">APMV</name>
    <dbReference type="NCBI Taxonomy" id="212035"/>
    <lineage>
        <taxon>Viruses</taxon>
        <taxon>Varidnaviria</taxon>
        <taxon>Bamfordvirae</taxon>
        <taxon>Nucleocytoviricota</taxon>
        <taxon>Megaviricetes</taxon>
        <taxon>Imitervirales</taxon>
        <taxon>Mimiviridae</taxon>
        <taxon>Megamimivirinae</taxon>
        <taxon>Mimivirus</taxon>
        <taxon>Mimivirus bradfordmassiliense</taxon>
    </lineage>
</organism>
<sequence>MMSQTFFLISDPDNLDYPIYTVHDKSRILDCFCDISLFKTTTITEIELDNEHPDFKILKLYGNTFMTNRIIKNTKYSLLDVNTVQMLLDYGDPDYEFKSTHYLYVFYMSQNRFDICDYLIASNIKFVGTYTKSCLLNQNTLTNYHLFKYIINNSEFFGCCHYDLMYAAFRYTKFYDLCDHLIKSEYNCNIDYDNFLRQLFNKTDSNGFTINCELDTFQIKKLIDENYFDNEKLFYTVLYDSFELTKYIVEKGFYYDFDSVINSDINLEMLKFFIELGNNLTDDHIMILLSKKYSNDYCKKITFLLDNNYITEKHFTNKIVSDIVWFDLNLLDYLINKLNIIELINLDILMKTSILRENINMIKKCIEYGINVDDYMKFAVDYSICITKKLIELGGNIPDDICIYNPYHSLSIESIDIILENNYDSLENLLLKIINQNKETLYIDEILHIMGKLISTNKPIPDLNKILIKSCYYSDNIYKEIIKLDLNLDNYQQIFVNIMRKEYDNIEQLIFFSTYYNSIELLFVVVLSENIDLFKLLLEINCNDTDYLSWAFVFSGRCFKLMKYIVDNYNVDIYQRQIEVCIMIPKKDYQTKRYLQLMGYEISCIYNTECNNDKLPLVEFMKELSIDSTIRP</sequence>
<keyword id="KW-0040">ANK repeat</keyword>
<keyword id="KW-1185">Reference proteome</keyword>
<keyword id="KW-0677">Repeat</keyword>
<dbReference type="EMBL" id="AY653733">
    <property type="protein sequence ID" value="AAV51027.1"/>
    <property type="molecule type" value="Genomic_DNA"/>
</dbReference>
<dbReference type="SMR" id="Q5UPQ6"/>
<dbReference type="KEGG" id="vg:9925425"/>
<dbReference type="OrthoDB" id="32221at10239"/>
<dbReference type="Proteomes" id="UP000001134">
    <property type="component" value="Genome"/>
</dbReference>
<name>YL767_MIMIV</name>
<proteinExistence type="predicted"/>
<organismHost>
    <name type="scientific">Acanthamoeba polyphaga</name>
    <name type="common">Amoeba</name>
    <dbReference type="NCBI Taxonomy" id="5757"/>
</organismHost>